<name>PTH_CHLTR</name>
<dbReference type="EC" id="3.1.1.29" evidence="1"/>
<dbReference type="EMBL" id="AE001273">
    <property type="protein sequence ID" value="AAC68395.1"/>
    <property type="molecule type" value="Genomic_DNA"/>
</dbReference>
<dbReference type="PIR" id="F71469">
    <property type="entry name" value="F71469"/>
</dbReference>
<dbReference type="RefSeq" id="NP_220320.1">
    <property type="nucleotide sequence ID" value="NC_000117.1"/>
</dbReference>
<dbReference type="RefSeq" id="WP_009873224.1">
    <property type="nucleotide sequence ID" value="NC_000117.1"/>
</dbReference>
<dbReference type="SMR" id="O84806"/>
<dbReference type="FunCoup" id="O84806">
    <property type="interactions" value="251"/>
</dbReference>
<dbReference type="STRING" id="272561.CT_800"/>
<dbReference type="EnsemblBacteria" id="AAC68395">
    <property type="protein sequence ID" value="AAC68395"/>
    <property type="gene ID" value="CT_800"/>
</dbReference>
<dbReference type="GeneID" id="884599"/>
<dbReference type="KEGG" id="ctr:CT_800"/>
<dbReference type="PATRIC" id="fig|272561.5.peg.881"/>
<dbReference type="HOGENOM" id="CLU_062456_3_1_0"/>
<dbReference type="InParanoid" id="O84806"/>
<dbReference type="OrthoDB" id="9800507at2"/>
<dbReference type="Proteomes" id="UP000000431">
    <property type="component" value="Chromosome"/>
</dbReference>
<dbReference type="GO" id="GO:0005737">
    <property type="term" value="C:cytoplasm"/>
    <property type="evidence" value="ECO:0007669"/>
    <property type="project" value="UniProtKB-SubCell"/>
</dbReference>
<dbReference type="GO" id="GO:0004045">
    <property type="term" value="F:peptidyl-tRNA hydrolase activity"/>
    <property type="evidence" value="ECO:0000318"/>
    <property type="project" value="GO_Central"/>
</dbReference>
<dbReference type="GO" id="GO:0000049">
    <property type="term" value="F:tRNA binding"/>
    <property type="evidence" value="ECO:0007669"/>
    <property type="project" value="UniProtKB-UniRule"/>
</dbReference>
<dbReference type="GO" id="GO:0006515">
    <property type="term" value="P:protein quality control for misfolded or incompletely synthesized proteins"/>
    <property type="evidence" value="ECO:0007669"/>
    <property type="project" value="UniProtKB-UniRule"/>
</dbReference>
<dbReference type="GO" id="GO:0072344">
    <property type="term" value="P:rescue of stalled ribosome"/>
    <property type="evidence" value="ECO:0007669"/>
    <property type="project" value="UniProtKB-UniRule"/>
</dbReference>
<dbReference type="CDD" id="cd00462">
    <property type="entry name" value="PTH"/>
    <property type="match status" value="1"/>
</dbReference>
<dbReference type="FunFam" id="3.40.50.1470:FF:000001">
    <property type="entry name" value="Peptidyl-tRNA hydrolase"/>
    <property type="match status" value="1"/>
</dbReference>
<dbReference type="Gene3D" id="3.40.50.1470">
    <property type="entry name" value="Peptidyl-tRNA hydrolase"/>
    <property type="match status" value="1"/>
</dbReference>
<dbReference type="HAMAP" id="MF_00083">
    <property type="entry name" value="Pept_tRNA_hydro_bact"/>
    <property type="match status" value="1"/>
</dbReference>
<dbReference type="InterPro" id="IPR001328">
    <property type="entry name" value="Pept_tRNA_hydro"/>
</dbReference>
<dbReference type="InterPro" id="IPR018171">
    <property type="entry name" value="Pept_tRNA_hydro_CS"/>
</dbReference>
<dbReference type="InterPro" id="IPR036416">
    <property type="entry name" value="Pept_tRNA_hydro_sf"/>
</dbReference>
<dbReference type="NCBIfam" id="TIGR00447">
    <property type="entry name" value="pth"/>
    <property type="match status" value="1"/>
</dbReference>
<dbReference type="PANTHER" id="PTHR17224">
    <property type="entry name" value="PEPTIDYL-TRNA HYDROLASE"/>
    <property type="match status" value="1"/>
</dbReference>
<dbReference type="PANTHER" id="PTHR17224:SF1">
    <property type="entry name" value="PEPTIDYL-TRNA HYDROLASE"/>
    <property type="match status" value="1"/>
</dbReference>
<dbReference type="Pfam" id="PF01195">
    <property type="entry name" value="Pept_tRNA_hydro"/>
    <property type="match status" value="1"/>
</dbReference>
<dbReference type="SUPFAM" id="SSF53178">
    <property type="entry name" value="Peptidyl-tRNA hydrolase-like"/>
    <property type="match status" value="1"/>
</dbReference>
<dbReference type="PROSITE" id="PS01195">
    <property type="entry name" value="PEPT_TRNA_HYDROL_1"/>
    <property type="match status" value="1"/>
</dbReference>
<dbReference type="PROSITE" id="PS01196">
    <property type="entry name" value="PEPT_TRNA_HYDROL_2"/>
    <property type="match status" value="1"/>
</dbReference>
<proteinExistence type="inferred from homology"/>
<reference key="1">
    <citation type="journal article" date="1998" name="Science">
        <title>Genome sequence of an obligate intracellular pathogen of humans: Chlamydia trachomatis.</title>
        <authorList>
            <person name="Stephens R.S."/>
            <person name="Kalman S."/>
            <person name="Lammel C.J."/>
            <person name="Fan J."/>
            <person name="Marathe R."/>
            <person name="Aravind L."/>
            <person name="Mitchell W.P."/>
            <person name="Olinger L."/>
            <person name="Tatusov R.L."/>
            <person name="Zhao Q."/>
            <person name="Koonin E.V."/>
            <person name="Davis R.W."/>
        </authorList>
    </citation>
    <scope>NUCLEOTIDE SEQUENCE [LARGE SCALE GENOMIC DNA]</scope>
    <source>
        <strain>ATCC VR-885 / DSM 19411 / UW-3/Cx</strain>
    </source>
</reference>
<protein>
    <recommendedName>
        <fullName evidence="1">Peptidyl-tRNA hydrolase</fullName>
        <shortName evidence="1">Pth</shortName>
        <ecNumber evidence="1">3.1.1.29</ecNumber>
    </recommendedName>
</protein>
<evidence type="ECO:0000255" key="1">
    <source>
        <dbReference type="HAMAP-Rule" id="MF_00083"/>
    </source>
</evidence>
<comment type="function">
    <text evidence="1">Hydrolyzes ribosome-free peptidyl-tRNAs (with 1 or more amino acids incorporated), which drop off the ribosome during protein synthesis, or as a result of ribosome stalling.</text>
</comment>
<comment type="function">
    <text evidence="1">Catalyzes the release of premature peptidyl moieties from peptidyl-tRNA molecules trapped in stalled 50S ribosomal subunits, and thus maintains levels of free tRNAs and 50S ribosomes.</text>
</comment>
<comment type="catalytic activity">
    <reaction evidence="1">
        <text>an N-acyl-L-alpha-aminoacyl-tRNA + H2O = an N-acyl-L-amino acid + a tRNA + H(+)</text>
        <dbReference type="Rhea" id="RHEA:54448"/>
        <dbReference type="Rhea" id="RHEA-COMP:10123"/>
        <dbReference type="Rhea" id="RHEA-COMP:13883"/>
        <dbReference type="ChEBI" id="CHEBI:15377"/>
        <dbReference type="ChEBI" id="CHEBI:15378"/>
        <dbReference type="ChEBI" id="CHEBI:59874"/>
        <dbReference type="ChEBI" id="CHEBI:78442"/>
        <dbReference type="ChEBI" id="CHEBI:138191"/>
        <dbReference type="EC" id="3.1.1.29"/>
    </reaction>
</comment>
<comment type="subunit">
    <text evidence="1">Monomer.</text>
</comment>
<comment type="subcellular location">
    <subcellularLocation>
        <location evidence="1">Cytoplasm</location>
    </subcellularLocation>
</comment>
<comment type="similarity">
    <text evidence="1">Belongs to the PTH family.</text>
</comment>
<keyword id="KW-0963">Cytoplasm</keyword>
<keyword id="KW-0378">Hydrolase</keyword>
<keyword id="KW-1185">Reference proteome</keyword>
<keyword id="KW-0694">RNA-binding</keyword>
<keyword id="KW-0820">tRNA-binding</keyword>
<feature type="chain" id="PRO_0000187720" description="Peptidyl-tRNA hydrolase">
    <location>
        <begin position="1"/>
        <end position="179"/>
    </location>
</feature>
<feature type="active site" description="Proton acceptor" evidence="1">
    <location>
        <position position="20"/>
    </location>
</feature>
<feature type="binding site" evidence="1">
    <location>
        <position position="15"/>
    </location>
    <ligand>
        <name>tRNA</name>
        <dbReference type="ChEBI" id="CHEBI:17843"/>
    </ligand>
</feature>
<feature type="binding site" evidence="1">
    <location>
        <position position="66"/>
    </location>
    <ligand>
        <name>tRNA</name>
        <dbReference type="ChEBI" id="CHEBI:17843"/>
    </ligand>
</feature>
<feature type="binding site" evidence="1">
    <location>
        <position position="68"/>
    </location>
    <ligand>
        <name>tRNA</name>
        <dbReference type="ChEBI" id="CHEBI:17843"/>
    </ligand>
</feature>
<feature type="binding site" evidence="1">
    <location>
        <position position="114"/>
    </location>
    <ligand>
        <name>tRNA</name>
        <dbReference type="ChEBI" id="CHEBI:17843"/>
    </ligand>
</feature>
<feature type="site" description="Discriminates between blocked and unblocked aminoacyl-tRNA" evidence="1">
    <location>
        <position position="10"/>
    </location>
</feature>
<feature type="site" description="Stabilizes the basic form of H active site to accept a proton" evidence="1">
    <location>
        <position position="93"/>
    </location>
</feature>
<accession>O84806</accession>
<organism>
    <name type="scientific">Chlamydia trachomatis serovar D (strain ATCC VR-885 / DSM 19411 / UW-3/Cx)</name>
    <dbReference type="NCBI Taxonomy" id="272561"/>
    <lineage>
        <taxon>Bacteria</taxon>
        <taxon>Pseudomonadati</taxon>
        <taxon>Chlamydiota</taxon>
        <taxon>Chlamydiia</taxon>
        <taxon>Chlamydiales</taxon>
        <taxon>Chlamydiaceae</taxon>
        <taxon>Chlamydia/Chlamydophila group</taxon>
        <taxon>Chlamydia</taxon>
    </lineage>
</organism>
<sequence>MVKLVVGIGNPGRQYVWTRHNIGFLLLDSLASRFLGAFREAPRLYASFAKVEISSEAVVLMKPTTYVNLTGKAVLAAKKFFDVSMEDILVVADDINREFGFVRFRQDCGSGGHNGIKNTTQILQSNHYWQLRLGVGRPSYPGAEGVADYVLSSFSLNEKEKLNDFLEKGIEEILPWLGC</sequence>
<gene>
    <name evidence="1" type="primary">pth</name>
    <name type="ordered locus">CT_800</name>
</gene>